<name>HEY_DROME</name>
<organism>
    <name type="scientific">Drosophila melanogaster</name>
    <name type="common">Fruit fly</name>
    <dbReference type="NCBI Taxonomy" id="7227"/>
    <lineage>
        <taxon>Eukaryota</taxon>
        <taxon>Metazoa</taxon>
        <taxon>Ecdysozoa</taxon>
        <taxon>Arthropoda</taxon>
        <taxon>Hexapoda</taxon>
        <taxon>Insecta</taxon>
        <taxon>Pterygota</taxon>
        <taxon>Neoptera</taxon>
        <taxon>Endopterygota</taxon>
        <taxon>Diptera</taxon>
        <taxon>Brachycera</taxon>
        <taxon>Muscomorpha</taxon>
        <taxon>Ephydroidea</taxon>
        <taxon>Drosophilidae</taxon>
        <taxon>Drosophila</taxon>
        <taxon>Sophophora</taxon>
    </lineage>
</organism>
<accession>Q7KM13</accession>
<accession>Q058S4</accession>
<proteinExistence type="evidence at transcript level"/>
<sequence>MDHNMHVNAPSLHHWGYAAGPGVVMPGATATTPQSHWVPPPQSHHSAHSNHSHGHSQGHSHGIGSLKRTLSESDCDDLYSEESSKEQISPSEPGSCQLMSRKKRRGVIEKKRRDRINSSLTELKRLVPSAYEKQGSAKLEKAEILQLTVEHLKSLQSKTLDSLSYDPQRVAMDYHIIGFRECAAEVARYLVTIEGMDIQDPLRLRLMSHLQYFVQQRELSAKSCASPGGWSPAAPSSSGYQPNCAAAPYQSYAAPANPGAYVSSYPTLSASPSQQAQQLGGRTSVSRTSGSAVTESLPSHDLHSDSSSQQQQQQQQQQQQQQQHQQQQHQQQQQRTQTTPQPTQQQHYTHDHSAVHSEQQVPTYIELTNSNRPAAIGSDSLSYSAAPQYPVSGLPGQDYNNSSVLQYATPNGAKPYRPWGAEMAY</sequence>
<gene>
    <name type="primary">Hey</name>
    <name type="synonym">Hesr-1</name>
    <name type="ORF">CG11194</name>
</gene>
<comment type="function">
    <text evidence="1">Transcriptional repressor which acts as a downstream effector of Notch signaling.</text>
</comment>
<comment type="subcellular location">
    <subcellularLocation>
        <location evidence="2 3">Nucleus</location>
    </subcellularLocation>
</comment>
<comment type="similarity">
    <text evidence="5">Belongs to the HEY family.</text>
</comment>
<dbReference type="EMBL" id="AF151523">
    <property type="protein sequence ID" value="AAD46771.1"/>
    <property type="molecule type" value="mRNA"/>
</dbReference>
<dbReference type="EMBL" id="AE013599">
    <property type="protein sequence ID" value="AAF59152.2"/>
    <property type="molecule type" value="Genomic_DNA"/>
</dbReference>
<dbReference type="EMBL" id="BT029144">
    <property type="protein sequence ID" value="ABJ17078.1"/>
    <property type="molecule type" value="mRNA"/>
</dbReference>
<dbReference type="RefSeq" id="NP_523657.1">
    <property type="nucleotide sequence ID" value="NM_078933.3"/>
</dbReference>
<dbReference type="SMR" id="Q7KM13"/>
<dbReference type="BioGRID" id="61625">
    <property type="interactions" value="49"/>
</dbReference>
<dbReference type="FunCoup" id="Q7KM13">
    <property type="interactions" value="57"/>
</dbReference>
<dbReference type="IntAct" id="Q7KM13">
    <property type="interactions" value="8"/>
</dbReference>
<dbReference type="STRING" id="7227.FBpp0087945"/>
<dbReference type="PaxDb" id="7227-FBpp0087945"/>
<dbReference type="EnsemblMetazoa" id="FBtr0088869">
    <property type="protein sequence ID" value="FBpp0087945"/>
    <property type="gene ID" value="FBgn0027788"/>
</dbReference>
<dbReference type="GeneID" id="35764"/>
<dbReference type="KEGG" id="dme:Dmel_CG11194"/>
<dbReference type="AGR" id="FB:FBgn0027788"/>
<dbReference type="CTD" id="100188776"/>
<dbReference type="FlyBase" id="FBgn0027788">
    <property type="gene designation" value="Hey"/>
</dbReference>
<dbReference type="VEuPathDB" id="VectorBase:FBgn0027788"/>
<dbReference type="eggNOG" id="KOG4304">
    <property type="taxonomic scope" value="Eukaryota"/>
</dbReference>
<dbReference type="HOGENOM" id="CLU_048294_0_0_1"/>
<dbReference type="InParanoid" id="Q7KM13"/>
<dbReference type="OMA" id="QQVPTYI"/>
<dbReference type="OrthoDB" id="6371181at2759"/>
<dbReference type="PhylomeDB" id="Q7KM13"/>
<dbReference type="SignaLink" id="Q7KM13"/>
<dbReference type="BioGRID-ORCS" id="35764">
    <property type="hits" value="0 hits in 3 CRISPR screens"/>
</dbReference>
<dbReference type="GenomeRNAi" id="35764"/>
<dbReference type="PRO" id="PR:Q7KM13"/>
<dbReference type="Proteomes" id="UP000000803">
    <property type="component" value="Chromosome 2R"/>
</dbReference>
<dbReference type="Bgee" id="FBgn0027788">
    <property type="expression patterns" value="Expressed in T neuron T5c (Drosophila) in embryonic/larval optic lobe (Drosophila) and 12 other cell types or tissues"/>
</dbReference>
<dbReference type="GO" id="GO:0005634">
    <property type="term" value="C:nucleus"/>
    <property type="evidence" value="ECO:0000314"/>
    <property type="project" value="FlyBase"/>
</dbReference>
<dbReference type="GO" id="GO:0003677">
    <property type="term" value="F:DNA binding"/>
    <property type="evidence" value="ECO:0000250"/>
    <property type="project" value="UniProtKB"/>
</dbReference>
<dbReference type="GO" id="GO:0046983">
    <property type="term" value="F:protein dimerization activity"/>
    <property type="evidence" value="ECO:0007669"/>
    <property type="project" value="InterPro"/>
</dbReference>
<dbReference type="GO" id="GO:0000978">
    <property type="term" value="F:RNA polymerase II cis-regulatory region sequence-specific DNA binding"/>
    <property type="evidence" value="ECO:0000318"/>
    <property type="project" value="GO_Central"/>
</dbReference>
<dbReference type="GO" id="GO:0048664">
    <property type="term" value="P:neuron fate determination"/>
    <property type="evidence" value="ECO:0000315"/>
    <property type="project" value="FlyBase"/>
</dbReference>
<dbReference type="GO" id="GO:0007219">
    <property type="term" value="P:Notch signaling pathway"/>
    <property type="evidence" value="ECO:0007669"/>
    <property type="project" value="UniProtKB-KW"/>
</dbReference>
<dbReference type="GO" id="GO:0006355">
    <property type="term" value="P:regulation of DNA-templated transcription"/>
    <property type="evidence" value="ECO:0007669"/>
    <property type="project" value="InterPro"/>
</dbReference>
<dbReference type="GO" id="GO:0050767">
    <property type="term" value="P:regulation of neurogenesis"/>
    <property type="evidence" value="ECO:0000318"/>
    <property type="project" value="GO_Central"/>
</dbReference>
<dbReference type="FunFam" id="4.10.280.10:FF:000012">
    <property type="entry name" value="hairy/enhancer-of-split related with YRPW motif protein 1"/>
    <property type="match status" value="1"/>
</dbReference>
<dbReference type="Gene3D" id="6.10.250.980">
    <property type="match status" value="1"/>
</dbReference>
<dbReference type="Gene3D" id="4.10.280.10">
    <property type="entry name" value="Helix-loop-helix DNA-binding domain"/>
    <property type="match status" value="1"/>
</dbReference>
<dbReference type="InterPro" id="IPR011598">
    <property type="entry name" value="bHLH_dom"/>
</dbReference>
<dbReference type="InterPro" id="IPR050370">
    <property type="entry name" value="HES_HEY"/>
</dbReference>
<dbReference type="InterPro" id="IPR036638">
    <property type="entry name" value="HLH_DNA-bd_sf"/>
</dbReference>
<dbReference type="InterPro" id="IPR003650">
    <property type="entry name" value="Orange_dom"/>
</dbReference>
<dbReference type="PANTHER" id="PTHR10985">
    <property type="entry name" value="BASIC HELIX-LOOP-HELIX TRANSCRIPTION FACTOR, HES-RELATED"/>
    <property type="match status" value="1"/>
</dbReference>
<dbReference type="Pfam" id="PF07527">
    <property type="entry name" value="Hairy_orange"/>
    <property type="match status" value="1"/>
</dbReference>
<dbReference type="Pfam" id="PF00010">
    <property type="entry name" value="HLH"/>
    <property type="match status" value="1"/>
</dbReference>
<dbReference type="SMART" id="SM00353">
    <property type="entry name" value="HLH"/>
    <property type="match status" value="1"/>
</dbReference>
<dbReference type="SMART" id="SM00511">
    <property type="entry name" value="ORANGE"/>
    <property type="match status" value="1"/>
</dbReference>
<dbReference type="SUPFAM" id="SSF47459">
    <property type="entry name" value="HLH, helix-loop-helix DNA-binding domain"/>
    <property type="match status" value="1"/>
</dbReference>
<dbReference type="SUPFAM" id="SSF158457">
    <property type="entry name" value="Orange domain-like"/>
    <property type="match status" value="1"/>
</dbReference>
<dbReference type="PROSITE" id="PS50888">
    <property type="entry name" value="BHLH"/>
    <property type="match status" value="1"/>
</dbReference>
<dbReference type="PROSITE" id="PS51054">
    <property type="entry name" value="ORANGE"/>
    <property type="match status" value="1"/>
</dbReference>
<reference key="1">
    <citation type="journal article" date="1999" name="Biochem. Biophys. Res. Commun.">
        <title>Identification and expression of a novel family of bHLH cDNAs related to Drosophila hairy and enhancer of split.</title>
        <authorList>
            <person name="Kokubo H."/>
            <person name="Lun Y."/>
            <person name="Johnson R.L."/>
        </authorList>
    </citation>
    <scope>NUCLEOTIDE SEQUENCE [MRNA]</scope>
    <source>
        <tissue>Brain</tissue>
    </source>
</reference>
<reference key="2">
    <citation type="journal article" date="2000" name="Science">
        <title>The genome sequence of Drosophila melanogaster.</title>
        <authorList>
            <person name="Adams M.D."/>
            <person name="Celniker S.E."/>
            <person name="Holt R.A."/>
            <person name="Evans C.A."/>
            <person name="Gocayne J.D."/>
            <person name="Amanatides P.G."/>
            <person name="Scherer S.E."/>
            <person name="Li P.W."/>
            <person name="Hoskins R.A."/>
            <person name="Galle R.F."/>
            <person name="George R.A."/>
            <person name="Lewis S.E."/>
            <person name="Richards S."/>
            <person name="Ashburner M."/>
            <person name="Henderson S.N."/>
            <person name="Sutton G.G."/>
            <person name="Wortman J.R."/>
            <person name="Yandell M.D."/>
            <person name="Zhang Q."/>
            <person name="Chen L.X."/>
            <person name="Brandon R.C."/>
            <person name="Rogers Y.-H.C."/>
            <person name="Blazej R.G."/>
            <person name="Champe M."/>
            <person name="Pfeiffer B.D."/>
            <person name="Wan K.H."/>
            <person name="Doyle C."/>
            <person name="Baxter E.G."/>
            <person name="Helt G."/>
            <person name="Nelson C.R."/>
            <person name="Miklos G.L.G."/>
            <person name="Abril J.F."/>
            <person name="Agbayani A."/>
            <person name="An H.-J."/>
            <person name="Andrews-Pfannkoch C."/>
            <person name="Baldwin D."/>
            <person name="Ballew R.M."/>
            <person name="Basu A."/>
            <person name="Baxendale J."/>
            <person name="Bayraktaroglu L."/>
            <person name="Beasley E.M."/>
            <person name="Beeson K.Y."/>
            <person name="Benos P.V."/>
            <person name="Berman B.P."/>
            <person name="Bhandari D."/>
            <person name="Bolshakov S."/>
            <person name="Borkova D."/>
            <person name="Botchan M.R."/>
            <person name="Bouck J."/>
            <person name="Brokstein P."/>
            <person name="Brottier P."/>
            <person name="Burtis K.C."/>
            <person name="Busam D.A."/>
            <person name="Butler H."/>
            <person name="Cadieu E."/>
            <person name="Center A."/>
            <person name="Chandra I."/>
            <person name="Cherry J.M."/>
            <person name="Cawley S."/>
            <person name="Dahlke C."/>
            <person name="Davenport L.B."/>
            <person name="Davies P."/>
            <person name="de Pablos B."/>
            <person name="Delcher A."/>
            <person name="Deng Z."/>
            <person name="Mays A.D."/>
            <person name="Dew I."/>
            <person name="Dietz S.M."/>
            <person name="Dodson K."/>
            <person name="Doup L.E."/>
            <person name="Downes M."/>
            <person name="Dugan-Rocha S."/>
            <person name="Dunkov B.C."/>
            <person name="Dunn P."/>
            <person name="Durbin K.J."/>
            <person name="Evangelista C.C."/>
            <person name="Ferraz C."/>
            <person name="Ferriera S."/>
            <person name="Fleischmann W."/>
            <person name="Fosler C."/>
            <person name="Gabrielian A.E."/>
            <person name="Garg N.S."/>
            <person name="Gelbart W.M."/>
            <person name="Glasser K."/>
            <person name="Glodek A."/>
            <person name="Gong F."/>
            <person name="Gorrell J.H."/>
            <person name="Gu Z."/>
            <person name="Guan P."/>
            <person name="Harris M."/>
            <person name="Harris N.L."/>
            <person name="Harvey D.A."/>
            <person name="Heiman T.J."/>
            <person name="Hernandez J.R."/>
            <person name="Houck J."/>
            <person name="Hostin D."/>
            <person name="Houston K.A."/>
            <person name="Howland T.J."/>
            <person name="Wei M.-H."/>
            <person name="Ibegwam C."/>
            <person name="Jalali M."/>
            <person name="Kalush F."/>
            <person name="Karpen G.H."/>
            <person name="Ke Z."/>
            <person name="Kennison J.A."/>
            <person name="Ketchum K.A."/>
            <person name="Kimmel B.E."/>
            <person name="Kodira C.D."/>
            <person name="Kraft C.L."/>
            <person name="Kravitz S."/>
            <person name="Kulp D."/>
            <person name="Lai Z."/>
            <person name="Lasko P."/>
            <person name="Lei Y."/>
            <person name="Levitsky A.A."/>
            <person name="Li J.H."/>
            <person name="Li Z."/>
            <person name="Liang Y."/>
            <person name="Lin X."/>
            <person name="Liu X."/>
            <person name="Mattei B."/>
            <person name="McIntosh T.C."/>
            <person name="McLeod M.P."/>
            <person name="McPherson D."/>
            <person name="Merkulov G."/>
            <person name="Milshina N.V."/>
            <person name="Mobarry C."/>
            <person name="Morris J."/>
            <person name="Moshrefi A."/>
            <person name="Mount S.M."/>
            <person name="Moy M."/>
            <person name="Murphy B."/>
            <person name="Murphy L."/>
            <person name="Muzny D.M."/>
            <person name="Nelson D.L."/>
            <person name="Nelson D.R."/>
            <person name="Nelson K.A."/>
            <person name="Nixon K."/>
            <person name="Nusskern D.R."/>
            <person name="Pacleb J.M."/>
            <person name="Palazzolo M."/>
            <person name="Pittman G.S."/>
            <person name="Pan S."/>
            <person name="Pollard J."/>
            <person name="Puri V."/>
            <person name="Reese M.G."/>
            <person name="Reinert K."/>
            <person name="Remington K."/>
            <person name="Saunders R.D.C."/>
            <person name="Scheeler F."/>
            <person name="Shen H."/>
            <person name="Shue B.C."/>
            <person name="Siden-Kiamos I."/>
            <person name="Simpson M."/>
            <person name="Skupski M.P."/>
            <person name="Smith T.J."/>
            <person name="Spier E."/>
            <person name="Spradling A.C."/>
            <person name="Stapleton M."/>
            <person name="Strong R."/>
            <person name="Sun E."/>
            <person name="Svirskas R."/>
            <person name="Tector C."/>
            <person name="Turner R."/>
            <person name="Venter E."/>
            <person name="Wang A.H."/>
            <person name="Wang X."/>
            <person name="Wang Z.-Y."/>
            <person name="Wassarman D.A."/>
            <person name="Weinstock G.M."/>
            <person name="Weissenbach J."/>
            <person name="Williams S.M."/>
            <person name="Woodage T."/>
            <person name="Worley K.C."/>
            <person name="Wu D."/>
            <person name="Yang S."/>
            <person name="Yao Q.A."/>
            <person name="Ye J."/>
            <person name="Yeh R.-F."/>
            <person name="Zaveri J.S."/>
            <person name="Zhan M."/>
            <person name="Zhang G."/>
            <person name="Zhao Q."/>
            <person name="Zheng L."/>
            <person name="Zheng X.H."/>
            <person name="Zhong F.N."/>
            <person name="Zhong W."/>
            <person name="Zhou X."/>
            <person name="Zhu S.C."/>
            <person name="Zhu X."/>
            <person name="Smith H.O."/>
            <person name="Gibbs R.A."/>
            <person name="Myers E.W."/>
            <person name="Rubin G.M."/>
            <person name="Venter J.C."/>
        </authorList>
    </citation>
    <scope>NUCLEOTIDE SEQUENCE [LARGE SCALE GENOMIC DNA]</scope>
    <source>
        <strain>Berkeley</strain>
    </source>
</reference>
<reference key="3">
    <citation type="journal article" date="2002" name="Genome Biol.">
        <title>Annotation of the Drosophila melanogaster euchromatic genome: a systematic review.</title>
        <authorList>
            <person name="Misra S."/>
            <person name="Crosby M.A."/>
            <person name="Mungall C.J."/>
            <person name="Matthews B.B."/>
            <person name="Campbell K.S."/>
            <person name="Hradecky P."/>
            <person name="Huang Y."/>
            <person name="Kaminker J.S."/>
            <person name="Millburn G.H."/>
            <person name="Prochnik S.E."/>
            <person name="Smith C.D."/>
            <person name="Tupy J.L."/>
            <person name="Whitfield E.J."/>
            <person name="Bayraktaroglu L."/>
            <person name="Berman B.P."/>
            <person name="Bettencourt B.R."/>
            <person name="Celniker S.E."/>
            <person name="de Grey A.D.N.J."/>
            <person name="Drysdale R.A."/>
            <person name="Harris N.L."/>
            <person name="Richter J."/>
            <person name="Russo S."/>
            <person name="Schroeder A.J."/>
            <person name="Shu S.Q."/>
            <person name="Stapleton M."/>
            <person name="Yamada C."/>
            <person name="Ashburner M."/>
            <person name="Gelbart W.M."/>
            <person name="Rubin G.M."/>
            <person name="Lewis S.E."/>
        </authorList>
    </citation>
    <scope>GENOME REANNOTATION</scope>
    <source>
        <strain>Berkeley</strain>
    </source>
</reference>
<reference key="4">
    <citation type="submission" date="2006-10" db="EMBL/GenBank/DDBJ databases">
        <authorList>
            <person name="Stapleton M."/>
            <person name="Carlson J.W."/>
            <person name="Frise E."/>
            <person name="Kapadia B."/>
            <person name="Park S."/>
            <person name="Wan K.H."/>
            <person name="Yu C."/>
            <person name="Celniker S.E."/>
        </authorList>
    </citation>
    <scope>NUCLEOTIDE SEQUENCE [LARGE SCALE MRNA]</scope>
    <source>
        <strain>Berkeley</strain>
    </source>
</reference>
<protein>
    <recommendedName>
        <fullName>Hairy/enhancer-of-split related with YRPW motif protein</fullName>
    </recommendedName>
</protein>
<keyword id="KW-0217">Developmental protein</keyword>
<keyword id="KW-0238">DNA-binding</keyword>
<keyword id="KW-0914">Notch signaling pathway</keyword>
<keyword id="KW-0539">Nucleus</keyword>
<keyword id="KW-1185">Reference proteome</keyword>
<keyword id="KW-0678">Repressor</keyword>
<keyword id="KW-0804">Transcription</keyword>
<keyword id="KW-0805">Transcription regulation</keyword>
<evidence type="ECO:0000250" key="1"/>
<evidence type="ECO:0000255" key="2">
    <source>
        <dbReference type="PROSITE-ProRule" id="PRU00380"/>
    </source>
</evidence>
<evidence type="ECO:0000255" key="3">
    <source>
        <dbReference type="PROSITE-ProRule" id="PRU00981"/>
    </source>
</evidence>
<evidence type="ECO:0000256" key="4">
    <source>
        <dbReference type="SAM" id="MobiDB-lite"/>
    </source>
</evidence>
<evidence type="ECO:0000305" key="5"/>
<feature type="chain" id="PRO_0000286432" description="Hairy/enhancer-of-split related with YRPW motif protein">
    <location>
        <begin position="1"/>
        <end position="425"/>
    </location>
</feature>
<feature type="domain" description="bHLH" evidence="3">
    <location>
        <begin position="100"/>
        <end position="155"/>
    </location>
</feature>
<feature type="domain" description="Orange" evidence="2">
    <location>
        <begin position="174"/>
        <end position="210"/>
    </location>
</feature>
<feature type="region of interest" description="Disordered" evidence="4">
    <location>
        <begin position="26"/>
        <end position="109"/>
    </location>
</feature>
<feature type="region of interest" description="Disordered" evidence="4">
    <location>
        <begin position="272"/>
        <end position="357"/>
    </location>
</feature>
<feature type="short sequence motif" description="YRPW motif">
    <location>
        <begin position="416"/>
        <end position="419"/>
    </location>
</feature>
<feature type="compositionally biased region" description="Basic residues" evidence="4">
    <location>
        <begin position="45"/>
        <end position="58"/>
    </location>
</feature>
<feature type="compositionally biased region" description="Polar residues" evidence="4">
    <location>
        <begin position="86"/>
        <end position="98"/>
    </location>
</feature>
<feature type="compositionally biased region" description="Low complexity" evidence="4">
    <location>
        <begin position="272"/>
        <end position="297"/>
    </location>
</feature>
<feature type="compositionally biased region" description="Low complexity" evidence="4">
    <location>
        <begin position="305"/>
        <end position="346"/>
    </location>
</feature>
<feature type="sequence conflict" description="In Ref. 4; ABJ17078." evidence="5" ref="4">
    <location>
        <begin position="322"/>
        <end position="323"/>
    </location>
</feature>
<feature type="sequence conflict" description="In Ref. 4; ABJ17078." evidence="5" ref="4">
    <original>I</original>
    <variation>L</variation>
    <location>
        <position position="376"/>
    </location>
</feature>